<accession>B3CTE6</accession>
<evidence type="ECO:0000255" key="1">
    <source>
        <dbReference type="HAMAP-Rule" id="MF_00480"/>
    </source>
</evidence>
<evidence type="ECO:0000305" key="2"/>
<keyword id="KW-0687">Ribonucleoprotein</keyword>
<keyword id="KW-0689">Ribosomal protein</keyword>
<keyword id="KW-0694">RNA-binding</keyword>
<keyword id="KW-0699">rRNA-binding</keyword>
<keyword id="KW-0820">tRNA-binding</keyword>
<proteinExistence type="inferred from homology"/>
<organism>
    <name type="scientific">Orientia tsutsugamushi (strain Ikeda)</name>
    <name type="common">Rickettsia tsutsugamushi</name>
    <dbReference type="NCBI Taxonomy" id="334380"/>
    <lineage>
        <taxon>Bacteria</taxon>
        <taxon>Pseudomonadati</taxon>
        <taxon>Pseudomonadota</taxon>
        <taxon>Alphaproteobacteria</taxon>
        <taxon>Rickettsiales</taxon>
        <taxon>Rickettsiaceae</taxon>
        <taxon>Rickettsieae</taxon>
        <taxon>Orientia</taxon>
    </lineage>
</organism>
<reference key="1">
    <citation type="journal article" date="2008" name="DNA Res.">
        <title>The whole-genome sequencing of the obligate intracellular bacterium Orientia tsutsugamushi revealed massive gene amplification during reductive genome evolution.</title>
        <authorList>
            <person name="Nakayama K."/>
            <person name="Yamashita A."/>
            <person name="Kurokawa K."/>
            <person name="Morimoto T."/>
            <person name="Ogawa M."/>
            <person name="Fukuhara M."/>
            <person name="Urakami H."/>
            <person name="Ohnishi M."/>
            <person name="Uchiyama I."/>
            <person name="Ogura Y."/>
            <person name="Ooka T."/>
            <person name="Oshima K."/>
            <person name="Tamura A."/>
            <person name="Hattori M."/>
            <person name="Hayashi T."/>
        </authorList>
    </citation>
    <scope>NUCLEOTIDE SEQUENCE [LARGE SCALE GENOMIC DNA]</scope>
    <source>
        <strain>Ikeda</strain>
    </source>
</reference>
<gene>
    <name evidence="1" type="primary">rpsG</name>
    <name type="ordered locus">OTT_1185</name>
</gene>
<comment type="function">
    <text evidence="1">One of the primary rRNA binding proteins, it binds directly to 16S rRNA where it nucleates assembly of the head domain of the 30S subunit. Is located at the subunit interface close to the decoding center, probably blocks exit of the E-site tRNA.</text>
</comment>
<comment type="subunit">
    <text evidence="1">Part of the 30S ribosomal subunit. Contacts proteins S9 and S11.</text>
</comment>
<comment type="similarity">
    <text evidence="1">Belongs to the universal ribosomal protein uS7 family.</text>
</comment>
<sequence>MSRRCTEVKRKSLPSNKYQSISAATSNQIMLASKLINKLTHHGNKELVEKMLDKIIQHIKHKYKADGFEVLESACNNVKPSLQVESLRIGGATYQVPSPVNELRSYTLAIKWIINSAANRTFEKSMWQKIAEELYEASNGRGGAVKKKDDNHKMAEANQAFSHLITKRRSRGN</sequence>
<protein>
    <recommendedName>
        <fullName evidence="1">Small ribosomal subunit protein uS7</fullName>
    </recommendedName>
    <alternativeName>
        <fullName evidence="2">30S ribosomal protein S7</fullName>
    </alternativeName>
</protein>
<name>RS7_ORITI</name>
<dbReference type="EMBL" id="AP008981">
    <property type="protein sequence ID" value="BAG40643.1"/>
    <property type="molecule type" value="Genomic_DNA"/>
</dbReference>
<dbReference type="RefSeq" id="WP_012461712.1">
    <property type="nucleotide sequence ID" value="NC_010793.1"/>
</dbReference>
<dbReference type="SMR" id="B3CTE6"/>
<dbReference type="KEGG" id="ott:OTT_1185"/>
<dbReference type="HOGENOM" id="CLU_072226_1_1_5"/>
<dbReference type="OrthoDB" id="9807653at2"/>
<dbReference type="Proteomes" id="UP000001033">
    <property type="component" value="Chromosome"/>
</dbReference>
<dbReference type="GO" id="GO:0015935">
    <property type="term" value="C:small ribosomal subunit"/>
    <property type="evidence" value="ECO:0007669"/>
    <property type="project" value="InterPro"/>
</dbReference>
<dbReference type="GO" id="GO:0019843">
    <property type="term" value="F:rRNA binding"/>
    <property type="evidence" value="ECO:0007669"/>
    <property type="project" value="UniProtKB-UniRule"/>
</dbReference>
<dbReference type="GO" id="GO:0003735">
    <property type="term" value="F:structural constituent of ribosome"/>
    <property type="evidence" value="ECO:0007669"/>
    <property type="project" value="InterPro"/>
</dbReference>
<dbReference type="GO" id="GO:0000049">
    <property type="term" value="F:tRNA binding"/>
    <property type="evidence" value="ECO:0007669"/>
    <property type="project" value="UniProtKB-UniRule"/>
</dbReference>
<dbReference type="GO" id="GO:0006412">
    <property type="term" value="P:translation"/>
    <property type="evidence" value="ECO:0007669"/>
    <property type="project" value="UniProtKB-UniRule"/>
</dbReference>
<dbReference type="CDD" id="cd14869">
    <property type="entry name" value="uS7_Bacteria"/>
    <property type="match status" value="1"/>
</dbReference>
<dbReference type="Gene3D" id="1.10.455.10">
    <property type="entry name" value="Ribosomal protein S7 domain"/>
    <property type="match status" value="1"/>
</dbReference>
<dbReference type="HAMAP" id="MF_00480_B">
    <property type="entry name" value="Ribosomal_uS7_B"/>
    <property type="match status" value="1"/>
</dbReference>
<dbReference type="InterPro" id="IPR000235">
    <property type="entry name" value="Ribosomal_uS7"/>
</dbReference>
<dbReference type="InterPro" id="IPR005717">
    <property type="entry name" value="Ribosomal_uS7_bac/org-type"/>
</dbReference>
<dbReference type="InterPro" id="IPR023798">
    <property type="entry name" value="Ribosomal_uS7_dom"/>
</dbReference>
<dbReference type="InterPro" id="IPR036823">
    <property type="entry name" value="Ribosomal_uS7_dom_sf"/>
</dbReference>
<dbReference type="NCBIfam" id="TIGR01029">
    <property type="entry name" value="rpsG_bact"/>
    <property type="match status" value="1"/>
</dbReference>
<dbReference type="PANTHER" id="PTHR11205">
    <property type="entry name" value="RIBOSOMAL PROTEIN S7"/>
    <property type="match status" value="1"/>
</dbReference>
<dbReference type="Pfam" id="PF00177">
    <property type="entry name" value="Ribosomal_S7"/>
    <property type="match status" value="1"/>
</dbReference>
<dbReference type="PIRSF" id="PIRSF002122">
    <property type="entry name" value="RPS7p_RPS7a_RPS5e_RPS7o"/>
    <property type="match status" value="1"/>
</dbReference>
<dbReference type="SUPFAM" id="SSF47973">
    <property type="entry name" value="Ribosomal protein S7"/>
    <property type="match status" value="1"/>
</dbReference>
<feature type="chain" id="PRO_1000125978" description="Small ribosomal subunit protein uS7">
    <location>
        <begin position="1"/>
        <end position="173"/>
    </location>
</feature>